<name>RS7_RAT</name>
<organism>
    <name type="scientific">Rattus norvegicus</name>
    <name type="common">Rat</name>
    <dbReference type="NCBI Taxonomy" id="10116"/>
    <lineage>
        <taxon>Eukaryota</taxon>
        <taxon>Metazoa</taxon>
        <taxon>Chordata</taxon>
        <taxon>Craniata</taxon>
        <taxon>Vertebrata</taxon>
        <taxon>Euteleostomi</taxon>
        <taxon>Mammalia</taxon>
        <taxon>Eutheria</taxon>
        <taxon>Euarchontoglires</taxon>
        <taxon>Glires</taxon>
        <taxon>Rodentia</taxon>
        <taxon>Myomorpha</taxon>
        <taxon>Muroidea</taxon>
        <taxon>Muridae</taxon>
        <taxon>Murinae</taxon>
        <taxon>Rattus</taxon>
    </lineage>
</organism>
<keyword id="KW-0002">3D-structure</keyword>
<keyword id="KW-0007">Acetylation</keyword>
<keyword id="KW-0963">Cytoplasm</keyword>
<keyword id="KW-0206">Cytoskeleton</keyword>
<keyword id="KW-0903">Direct protein sequencing</keyword>
<keyword id="KW-1017">Isopeptide bond</keyword>
<keyword id="KW-0539">Nucleus</keyword>
<keyword id="KW-1185">Reference proteome</keyword>
<keyword id="KW-0687">Ribonucleoprotein</keyword>
<keyword id="KW-0689">Ribosomal protein</keyword>
<keyword id="KW-0832">Ubl conjugation</keyword>
<evidence type="ECO:0000250" key="1">
    <source>
        <dbReference type="UniProtKB" id="P62081"/>
    </source>
</evidence>
<evidence type="ECO:0000269" key="2">
    <source ref="4"/>
</evidence>
<evidence type="ECO:0000305" key="3"/>
<accession>P62083</accession>
<accession>P23821</accession>
<accession>P24818</accession>
<gene>
    <name type="primary">Rps7</name>
</gene>
<protein>
    <recommendedName>
        <fullName evidence="3">Small ribosomal subunit protein eS7</fullName>
    </recommendedName>
    <alternativeName>
        <fullName>40S ribosomal protein S7</fullName>
    </alternativeName>
    <alternativeName>
        <fullName>S8</fullName>
    </alternativeName>
</protein>
<proteinExistence type="evidence at protein level"/>
<feature type="chain" id="PRO_0000174192" description="Small ribosomal subunit protein eS7">
    <location>
        <begin position="1"/>
        <end position="194"/>
    </location>
</feature>
<feature type="modified residue" description="N-acetylmethionine" evidence="2">
    <location>
        <position position="1"/>
    </location>
</feature>
<feature type="modified residue" description="N6-acetyllysine; alternate" evidence="1">
    <location>
        <position position="74"/>
    </location>
</feature>
<feature type="cross-link" description="Glycyl lysine isopeptide (Lys-Gly) (interchain with G-Cter in SUMO2)" evidence="1">
    <location>
        <position position="70"/>
    </location>
</feature>
<feature type="cross-link" description="Glycyl lysine isopeptide (Lys-Gly) (interchain with G-Cter in SUMO2); alternate" evidence="1">
    <location>
        <position position="74"/>
    </location>
</feature>
<feature type="sequence conflict" description="In Ref. 2; CAA40177." evidence="3" ref="2">
    <original>F</original>
    <variation>S</variation>
    <location>
        <position position="2"/>
    </location>
</feature>
<feature type="sequence conflict" description="In Ref. 2; CAA40177." evidence="3" ref="2">
    <original>EKP</original>
    <variation>KKR</variation>
    <location>
        <begin position="14"/>
        <end position="16"/>
    </location>
</feature>
<feature type="sequence conflict" description="In Ref. 2; CAA40177." evidence="3" ref="2">
    <original>D</original>
    <variation>E</variation>
    <location>
        <position position="35"/>
    </location>
</feature>
<feature type="sequence conflict" description="In Ref. 2; CAA40177." evidence="3" ref="2">
    <original>A</original>
    <variation>T</variation>
    <location>
        <position position="38"/>
    </location>
</feature>
<feature type="sequence conflict" description="In Ref. 2; CAA40177." evidence="3" ref="2">
    <original>R</original>
    <variation>W</variation>
    <location>
        <position position="41"/>
    </location>
</feature>
<feature type="sequence conflict" description="In Ref. 2; CAA40177." evidence="3" ref="2">
    <original>IQVRL</original>
    <variation>MAKSGK</variation>
    <location>
        <begin position="75"/>
        <end position="79"/>
    </location>
</feature>
<feature type="sequence conflict" description="In Ref. 2; CAA40177." evidence="3" ref="2">
    <original>D</original>
    <variation>V</variation>
    <location>
        <position position="149"/>
    </location>
</feature>
<feature type="sequence conflict" description="In Ref. 2; CAA40177." evidence="3" ref="2">
    <original>LT</original>
    <variation>PL</variation>
    <location>
        <begin position="180"/>
        <end position="181"/>
    </location>
</feature>
<feature type="sequence conflict" description="In Ref. 2; CAA40177." evidence="3" ref="2">
    <original>FQL</original>
    <variation>VSV</variation>
    <location>
        <begin position="192"/>
        <end position="194"/>
    </location>
</feature>
<comment type="function">
    <text evidence="1">Component of the small ribosomal subunit. The ribosome is a large ribonucleoprotein complex responsible for the synthesis of proteins in the cell. Required for rRNA maturation. Part of the small subunit (SSU) processome, first precursor of the small eukaryotic ribosomal subunit. During the assembly of the SSU processome in the nucleolus, many ribosome biogenesis factors, an RNA chaperone and ribosomal proteins associate with the nascent pre-rRNA and work in concert to generate RNA folding, modifications, rearrangements and cleavage as well as targeted degradation of pre-ribosomal RNA by the RNA exosome.</text>
</comment>
<comment type="subunit">
    <text evidence="1">Component of the small ribosomal subunit. Part of the small subunit (SSU) processome, composed of more than 70 proteins and the RNA chaperone small nucleolar RNA (snoRNA) U3. Binds IPO9 with high affinity. Interacts with NEK6. Interacts with DESI2. Interacts with IPO5, IPO7 and KPNB1; these interactions may be involved in RPS7 nuclear import for the assembly of ribosomal subunits.</text>
</comment>
<comment type="subcellular location">
    <subcellularLocation>
        <location evidence="1">Cytoplasm</location>
        <location evidence="1">Cytoskeleton</location>
        <location evidence="1">Microtubule organizing center</location>
        <location evidence="1">Centrosome</location>
    </subcellularLocation>
    <subcellularLocation>
        <location evidence="1">Cytoplasm</location>
    </subcellularLocation>
    <subcellularLocation>
        <location evidence="1">Nucleus</location>
        <location evidence="1">Nucleolus</location>
    </subcellularLocation>
    <text evidence="1">Although RPS7 is functional within the cytoplasm, the assembly of ribosomal subunits occurs in the nucleus. RPS7 nuclear import is mediated by IPO5/RanBP5, IPO7/RanBP7, KPNB1/importin-beta or TPNO1/Trn. Colocalizes with NEK6 in the centrosome.</text>
</comment>
<comment type="PTM">
    <text evidence="1">Phosphorylated by NEK6.</text>
</comment>
<comment type="PTM">
    <text evidence="1">Ubiquitinated. Deubiquitinated by DESI2, leading to its stabilization.</text>
</comment>
<comment type="similarity">
    <text evidence="3">Belongs to the eukaryotic ribosomal protein eS7 family.</text>
</comment>
<reference key="1">
    <citation type="journal article" date="1990" name="FEBS Lett.">
        <title>The primary structure of rat ribosomal protein S7.</title>
        <authorList>
            <person name="Suzuki K."/>
            <person name="Olvera J."/>
            <person name="Wool I.G."/>
        </authorList>
    </citation>
    <scope>NUCLEOTIDE SEQUENCE [MRNA]</scope>
    <scope>PROTEIN SEQUENCE OF 33-47</scope>
    <source>
        <strain>Sprague-Dawley</strain>
        <tissue>Liver</tissue>
    </source>
</reference>
<reference key="2">
    <citation type="journal article" date="1991" name="Nucleic Acids Res.">
        <title>Sequence of a cDNA encoding rat ribosomal protein homologous to Xenopus laevis ribosomal protein S8.</title>
        <authorList>
            <person name="Guillier M."/>
            <person name="Leibovitch S."/>
        </authorList>
    </citation>
    <scope>NUCLEOTIDE SEQUENCE [MRNA]</scope>
    <source>
        <strain>Wistar</strain>
        <tissue>Skeletal muscle</tissue>
    </source>
</reference>
<reference key="3">
    <citation type="journal article" date="2004" name="Genome Res.">
        <title>The status, quality, and expansion of the NIH full-length cDNA project: the Mammalian Gene Collection (MGC).</title>
        <authorList>
            <consortium name="The MGC Project Team"/>
        </authorList>
    </citation>
    <scope>NUCLEOTIDE SEQUENCE [LARGE SCALE MRNA]</scope>
    <source>
        <tissue>Pituitary</tissue>
    </source>
</reference>
<reference key="4">
    <citation type="submission" date="2006-08" db="UniProtKB">
        <authorList>
            <person name="Bienvenut W.V."/>
            <person name="von Kriegsheim A.F."/>
            <person name="Kolch W."/>
        </authorList>
    </citation>
    <scope>PROTEIN SEQUENCE OF 1-7; 42-57; 100-106 AND 170-179</scope>
    <scope>ACETYLATION AT MET-1</scope>
    <scope>IDENTIFICATION BY MASS SPECTROMETRY</scope>
    <source>
        <tissue>Pheochromocytoma</tissue>
    </source>
</reference>
<dbReference type="EMBL" id="X53377">
    <property type="protein sequence ID" value="CAA37457.1"/>
    <property type="molecule type" value="mRNA"/>
</dbReference>
<dbReference type="EMBL" id="X56846">
    <property type="protein sequence ID" value="CAA40177.1"/>
    <property type="molecule type" value="mRNA"/>
</dbReference>
<dbReference type="EMBL" id="BC060557">
    <property type="protein sequence ID" value="AAH60557.1"/>
    <property type="molecule type" value="mRNA"/>
</dbReference>
<dbReference type="PIR" id="S12862">
    <property type="entry name" value="R3RT7"/>
</dbReference>
<dbReference type="RefSeq" id="NP_113758.2">
    <property type="nucleotide sequence ID" value="NM_031570.2"/>
</dbReference>
<dbReference type="RefSeq" id="XP_002726666.2">
    <property type="nucleotide sequence ID" value="XM_002726620.5"/>
</dbReference>
<dbReference type="RefSeq" id="XP_002729622.2">
    <property type="nucleotide sequence ID" value="XM_002729576.5"/>
</dbReference>
<dbReference type="RefSeq" id="XP_063117646.1">
    <property type="nucleotide sequence ID" value="XM_063261576.1"/>
</dbReference>
<dbReference type="PDB" id="7QGG">
    <property type="method" value="EM"/>
    <property type="resolution" value="2.86 A"/>
    <property type="chains" value="SH=1-194"/>
</dbReference>
<dbReference type="PDBsum" id="7QGG"/>
<dbReference type="EMDB" id="EMD-13954"/>
<dbReference type="SMR" id="P62083"/>
<dbReference type="BioGRID" id="247931">
    <property type="interactions" value="5"/>
</dbReference>
<dbReference type="FunCoup" id="P62083">
    <property type="interactions" value="3277"/>
</dbReference>
<dbReference type="IntAct" id="P62083">
    <property type="interactions" value="13"/>
</dbReference>
<dbReference type="MINT" id="P62083"/>
<dbReference type="STRING" id="10116.ENSRNOP00000075995"/>
<dbReference type="iPTMnet" id="P62083"/>
<dbReference type="PhosphoSitePlus" id="P62083"/>
<dbReference type="SwissPalm" id="P62083"/>
<dbReference type="jPOST" id="P62083"/>
<dbReference type="PaxDb" id="10116-ENSRNOP00000011333"/>
<dbReference type="GeneID" id="29258"/>
<dbReference type="KEGG" id="rno:29258"/>
<dbReference type="AGR" id="RGD:61907"/>
<dbReference type="CTD" id="6201"/>
<dbReference type="RGD" id="61907">
    <property type="gene designation" value="Rps7"/>
</dbReference>
<dbReference type="VEuPathDB" id="HostDB:ENSRNOG00000008373"/>
<dbReference type="eggNOG" id="KOG3320">
    <property type="taxonomic scope" value="Eukaryota"/>
</dbReference>
<dbReference type="HOGENOM" id="CLU_088621_1_2_1"/>
<dbReference type="InParanoid" id="P62083"/>
<dbReference type="OrthoDB" id="23056at9989"/>
<dbReference type="PhylomeDB" id="P62083"/>
<dbReference type="TreeFam" id="TF343364"/>
<dbReference type="Reactome" id="R-RNO-156827">
    <property type="pathway name" value="L13a-mediated translational silencing of Ceruloplasmin expression"/>
</dbReference>
<dbReference type="Reactome" id="R-RNO-1799339">
    <property type="pathway name" value="SRP-dependent cotranslational protein targeting to membrane"/>
</dbReference>
<dbReference type="Reactome" id="R-RNO-6791226">
    <property type="pathway name" value="Major pathway of rRNA processing in the nucleolus and cytosol"/>
</dbReference>
<dbReference type="Reactome" id="R-RNO-72649">
    <property type="pathway name" value="Translation initiation complex formation"/>
</dbReference>
<dbReference type="Reactome" id="R-RNO-72689">
    <property type="pathway name" value="Formation of a pool of free 40S subunits"/>
</dbReference>
<dbReference type="Reactome" id="R-RNO-72695">
    <property type="pathway name" value="Formation of the ternary complex, and subsequently, the 43S complex"/>
</dbReference>
<dbReference type="Reactome" id="R-RNO-72702">
    <property type="pathway name" value="Ribosomal scanning and start codon recognition"/>
</dbReference>
<dbReference type="Reactome" id="R-RNO-72706">
    <property type="pathway name" value="GTP hydrolysis and joining of the 60S ribosomal subunit"/>
</dbReference>
<dbReference type="Reactome" id="R-RNO-975956">
    <property type="pathway name" value="Nonsense Mediated Decay (NMD) independent of the Exon Junction Complex (EJC)"/>
</dbReference>
<dbReference type="Reactome" id="R-RNO-975957">
    <property type="pathway name" value="Nonsense Mediated Decay (NMD) enhanced by the Exon Junction Complex (EJC)"/>
</dbReference>
<dbReference type="CD-CODE" id="34881ED2">
    <property type="entry name" value="Nucleolus"/>
</dbReference>
<dbReference type="PRO" id="PR:P62083"/>
<dbReference type="Proteomes" id="UP000002494">
    <property type="component" value="Chromosome 6"/>
</dbReference>
<dbReference type="Bgee" id="ENSRNOG00000008551">
    <property type="expression patterns" value="Expressed in ovary and 20 other cell types or tissues"/>
</dbReference>
<dbReference type="ExpressionAtlas" id="P62083">
    <property type="expression patterns" value="baseline and differential"/>
</dbReference>
<dbReference type="GO" id="GO:0005813">
    <property type="term" value="C:centrosome"/>
    <property type="evidence" value="ECO:0000266"/>
    <property type="project" value="RGD"/>
</dbReference>
<dbReference type="GO" id="GO:0022626">
    <property type="term" value="C:cytosolic ribosome"/>
    <property type="evidence" value="ECO:0000266"/>
    <property type="project" value="RGD"/>
</dbReference>
<dbReference type="GO" id="GO:0022627">
    <property type="term" value="C:cytosolic small ribosomal subunit"/>
    <property type="evidence" value="ECO:0000314"/>
    <property type="project" value="RGD"/>
</dbReference>
<dbReference type="GO" id="GO:0005730">
    <property type="term" value="C:nucleolus"/>
    <property type="evidence" value="ECO:0000266"/>
    <property type="project" value="RGD"/>
</dbReference>
<dbReference type="GO" id="GO:0005634">
    <property type="term" value="C:nucleus"/>
    <property type="evidence" value="ECO:0000266"/>
    <property type="project" value="RGD"/>
</dbReference>
<dbReference type="GO" id="GO:0032991">
    <property type="term" value="C:protein-containing complex"/>
    <property type="evidence" value="ECO:0000266"/>
    <property type="project" value="RGD"/>
</dbReference>
<dbReference type="GO" id="GO:1990904">
    <property type="term" value="C:ribonucleoprotein complex"/>
    <property type="evidence" value="ECO:0000266"/>
    <property type="project" value="RGD"/>
</dbReference>
<dbReference type="GO" id="GO:0032040">
    <property type="term" value="C:small-subunit processome"/>
    <property type="evidence" value="ECO:0000250"/>
    <property type="project" value="UniProtKB"/>
</dbReference>
<dbReference type="GO" id="GO:0045202">
    <property type="term" value="C:synapse"/>
    <property type="evidence" value="ECO:0000266"/>
    <property type="project" value="RGD"/>
</dbReference>
<dbReference type="GO" id="GO:0003730">
    <property type="term" value="F:mRNA 3'-UTR binding"/>
    <property type="evidence" value="ECO:0000266"/>
    <property type="project" value="RGD"/>
</dbReference>
<dbReference type="GO" id="GO:0048027">
    <property type="term" value="F:mRNA 5'-UTR binding"/>
    <property type="evidence" value="ECO:0000266"/>
    <property type="project" value="RGD"/>
</dbReference>
<dbReference type="GO" id="GO:0008266">
    <property type="term" value="F:poly(U) RNA binding"/>
    <property type="evidence" value="ECO:0000314"/>
    <property type="project" value="RGD"/>
</dbReference>
<dbReference type="GO" id="GO:0019901">
    <property type="term" value="F:protein kinase binding"/>
    <property type="evidence" value="ECO:0000266"/>
    <property type="project" value="RGD"/>
</dbReference>
<dbReference type="GO" id="GO:0003735">
    <property type="term" value="F:structural constituent of ribosome"/>
    <property type="evidence" value="ECO:0000266"/>
    <property type="project" value="RGD"/>
</dbReference>
<dbReference type="GO" id="GO:1990948">
    <property type="term" value="F:ubiquitin ligase inhibitor activity"/>
    <property type="evidence" value="ECO:0000266"/>
    <property type="project" value="RGD"/>
</dbReference>
<dbReference type="GO" id="GO:2000059">
    <property type="term" value="P:negative regulation of ubiquitin-dependent protein catabolic process"/>
    <property type="evidence" value="ECO:0000266"/>
    <property type="project" value="RGD"/>
</dbReference>
<dbReference type="GO" id="GO:0014033">
    <property type="term" value="P:neural crest cell differentiation"/>
    <property type="evidence" value="ECO:0000266"/>
    <property type="project" value="RGD"/>
</dbReference>
<dbReference type="GO" id="GO:0001843">
    <property type="term" value="P:neural tube closure"/>
    <property type="evidence" value="ECO:0000266"/>
    <property type="project" value="RGD"/>
</dbReference>
<dbReference type="GO" id="GO:0010628">
    <property type="term" value="P:positive regulation of gene expression"/>
    <property type="evidence" value="ECO:0000266"/>
    <property type="project" value="RGD"/>
</dbReference>
<dbReference type="GO" id="GO:1902255">
    <property type="term" value="P:positive regulation of intrinsic apoptotic signaling pathway by p53 class mediator"/>
    <property type="evidence" value="ECO:0000266"/>
    <property type="project" value="RGD"/>
</dbReference>
<dbReference type="GO" id="GO:0050821">
    <property type="term" value="P:protein stabilization"/>
    <property type="evidence" value="ECO:0000266"/>
    <property type="project" value="RGD"/>
</dbReference>
<dbReference type="GO" id="GO:0042274">
    <property type="term" value="P:ribosomal small subunit biogenesis"/>
    <property type="evidence" value="ECO:0000250"/>
    <property type="project" value="UniProtKB"/>
</dbReference>
<dbReference type="GO" id="GO:0006364">
    <property type="term" value="P:rRNA processing"/>
    <property type="evidence" value="ECO:0000266"/>
    <property type="project" value="RGD"/>
</dbReference>
<dbReference type="GO" id="GO:0006412">
    <property type="term" value="P:translation"/>
    <property type="evidence" value="ECO:0007669"/>
    <property type="project" value="InterPro"/>
</dbReference>
<dbReference type="InterPro" id="IPR000554">
    <property type="entry name" value="Ribosomal_eS7"/>
</dbReference>
<dbReference type="InterPro" id="IPR047861">
    <property type="entry name" value="Ribosomal_eS7_CS"/>
</dbReference>
<dbReference type="PANTHER" id="PTHR11278">
    <property type="entry name" value="40S RIBOSOMAL PROTEIN S7"/>
    <property type="match status" value="1"/>
</dbReference>
<dbReference type="PANTHER" id="PTHR11278:SF0">
    <property type="entry name" value="SMALL RIBOSOMAL SUBUNIT PROTEIN ES7"/>
    <property type="match status" value="1"/>
</dbReference>
<dbReference type="Pfam" id="PF01251">
    <property type="entry name" value="Ribosomal_S7e"/>
    <property type="match status" value="1"/>
</dbReference>
<dbReference type="PROSITE" id="PS00948">
    <property type="entry name" value="RIBOSOMAL_S7E"/>
    <property type="match status" value="1"/>
</dbReference>
<sequence>MFSSSAKIVKPNGEKPDEFESGISQALLELEMNSDLKAQLRELNITAAKEIEVGGGRKAIIIFVPVPQLKSFQKIQVRLVRELEKKFSGKHVVFIAQRRILPKPTRKSRTKNKQKRPRSRTLTAVHDAILEDLVFPSEIVGKRIRVKLDGSRLIKVHLDKAQQNNVEHKVETFSGVYKKLTGKDVNFEFPEFQL</sequence>